<organism>
    <name type="scientific">Synechococcus sp. (strain WH7803)</name>
    <dbReference type="NCBI Taxonomy" id="32051"/>
    <lineage>
        <taxon>Bacteria</taxon>
        <taxon>Bacillati</taxon>
        <taxon>Cyanobacteriota</taxon>
        <taxon>Cyanophyceae</taxon>
        <taxon>Synechococcales</taxon>
        <taxon>Synechococcaceae</taxon>
        <taxon>Synechococcus</taxon>
    </lineage>
</organism>
<name>TRUB_SYNPW</name>
<evidence type="ECO:0000255" key="1">
    <source>
        <dbReference type="HAMAP-Rule" id="MF_01080"/>
    </source>
</evidence>
<reference key="1">
    <citation type="submission" date="2006-05" db="EMBL/GenBank/DDBJ databases">
        <authorList>
            <consortium name="Genoscope"/>
        </authorList>
    </citation>
    <scope>NUCLEOTIDE SEQUENCE [LARGE SCALE GENOMIC DNA]</scope>
    <source>
        <strain>WH7803</strain>
    </source>
</reference>
<proteinExistence type="inferred from homology"/>
<feature type="chain" id="PRO_1000084705" description="tRNA pseudouridine synthase B">
    <location>
        <begin position="1"/>
        <end position="300"/>
    </location>
</feature>
<feature type="active site" description="Nucleophile" evidence="1">
    <location>
        <position position="41"/>
    </location>
</feature>
<accession>A5GN82</accession>
<dbReference type="EC" id="5.4.99.25" evidence="1"/>
<dbReference type="EMBL" id="CT971583">
    <property type="protein sequence ID" value="CAK24397.1"/>
    <property type="molecule type" value="Genomic_DNA"/>
</dbReference>
<dbReference type="SMR" id="A5GN82"/>
<dbReference type="STRING" id="32051.SynWH7803_1971"/>
<dbReference type="KEGG" id="syx:SynWH7803_1971"/>
<dbReference type="eggNOG" id="COG0130">
    <property type="taxonomic scope" value="Bacteria"/>
</dbReference>
<dbReference type="HOGENOM" id="CLU_032087_0_0_3"/>
<dbReference type="OrthoDB" id="9802309at2"/>
<dbReference type="Proteomes" id="UP000001566">
    <property type="component" value="Chromosome"/>
</dbReference>
<dbReference type="GO" id="GO:0003723">
    <property type="term" value="F:RNA binding"/>
    <property type="evidence" value="ECO:0007669"/>
    <property type="project" value="InterPro"/>
</dbReference>
<dbReference type="GO" id="GO:0160148">
    <property type="term" value="F:tRNA pseudouridine(55) synthase activity"/>
    <property type="evidence" value="ECO:0007669"/>
    <property type="project" value="UniProtKB-EC"/>
</dbReference>
<dbReference type="GO" id="GO:1990481">
    <property type="term" value="P:mRNA pseudouridine synthesis"/>
    <property type="evidence" value="ECO:0007669"/>
    <property type="project" value="TreeGrafter"/>
</dbReference>
<dbReference type="GO" id="GO:0031119">
    <property type="term" value="P:tRNA pseudouridine synthesis"/>
    <property type="evidence" value="ECO:0007669"/>
    <property type="project" value="UniProtKB-UniRule"/>
</dbReference>
<dbReference type="CDD" id="cd02573">
    <property type="entry name" value="PseudoU_synth_EcTruB"/>
    <property type="match status" value="1"/>
</dbReference>
<dbReference type="Gene3D" id="3.30.2350.10">
    <property type="entry name" value="Pseudouridine synthase"/>
    <property type="match status" value="1"/>
</dbReference>
<dbReference type="HAMAP" id="MF_01080">
    <property type="entry name" value="TruB_bact"/>
    <property type="match status" value="1"/>
</dbReference>
<dbReference type="InterPro" id="IPR020103">
    <property type="entry name" value="PsdUridine_synth_cat_dom_sf"/>
</dbReference>
<dbReference type="InterPro" id="IPR002501">
    <property type="entry name" value="PsdUridine_synth_N"/>
</dbReference>
<dbReference type="InterPro" id="IPR014780">
    <property type="entry name" value="tRNA_psdUridine_synth_TruB"/>
</dbReference>
<dbReference type="InterPro" id="IPR015240">
    <property type="entry name" value="tRNA_sdUridine_synth_fam1_C"/>
</dbReference>
<dbReference type="InterPro" id="IPR032819">
    <property type="entry name" value="TruB_C"/>
</dbReference>
<dbReference type="NCBIfam" id="TIGR00431">
    <property type="entry name" value="TruB"/>
    <property type="match status" value="1"/>
</dbReference>
<dbReference type="PANTHER" id="PTHR13767:SF2">
    <property type="entry name" value="PSEUDOURIDYLATE SYNTHASE TRUB1"/>
    <property type="match status" value="1"/>
</dbReference>
<dbReference type="PANTHER" id="PTHR13767">
    <property type="entry name" value="TRNA-PSEUDOURIDINE SYNTHASE"/>
    <property type="match status" value="1"/>
</dbReference>
<dbReference type="Pfam" id="PF09157">
    <property type="entry name" value="TruB-C_2"/>
    <property type="match status" value="1"/>
</dbReference>
<dbReference type="Pfam" id="PF16198">
    <property type="entry name" value="TruB_C_2"/>
    <property type="match status" value="1"/>
</dbReference>
<dbReference type="Pfam" id="PF01509">
    <property type="entry name" value="TruB_N"/>
    <property type="match status" value="1"/>
</dbReference>
<dbReference type="SUPFAM" id="SSF55120">
    <property type="entry name" value="Pseudouridine synthase"/>
    <property type="match status" value="1"/>
</dbReference>
<gene>
    <name evidence="1" type="primary">truB</name>
    <name type="ordered locus">SynWH7803_1971</name>
</gene>
<protein>
    <recommendedName>
        <fullName evidence="1">tRNA pseudouridine synthase B</fullName>
        <ecNumber evidence="1">5.4.99.25</ecNumber>
    </recommendedName>
    <alternativeName>
        <fullName evidence="1">tRNA pseudouridine(55) synthase</fullName>
        <shortName evidence="1">Psi55 synthase</shortName>
    </alternativeName>
    <alternativeName>
        <fullName evidence="1">tRNA pseudouridylate synthase</fullName>
    </alternativeName>
    <alternativeName>
        <fullName evidence="1">tRNA-uridine isomerase</fullName>
    </alternativeName>
</protein>
<keyword id="KW-0413">Isomerase</keyword>
<keyword id="KW-1185">Reference proteome</keyword>
<keyword id="KW-0819">tRNA processing</keyword>
<comment type="function">
    <text evidence="1">Responsible for synthesis of pseudouridine from uracil-55 in the psi GC loop of transfer RNAs.</text>
</comment>
<comment type="catalytic activity">
    <reaction evidence="1">
        <text>uridine(55) in tRNA = pseudouridine(55) in tRNA</text>
        <dbReference type="Rhea" id="RHEA:42532"/>
        <dbReference type="Rhea" id="RHEA-COMP:10101"/>
        <dbReference type="Rhea" id="RHEA-COMP:10102"/>
        <dbReference type="ChEBI" id="CHEBI:65314"/>
        <dbReference type="ChEBI" id="CHEBI:65315"/>
        <dbReference type="EC" id="5.4.99.25"/>
    </reaction>
</comment>
<comment type="similarity">
    <text evidence="1">Belongs to the pseudouridine synthase TruB family. Type 1 subfamily.</text>
</comment>
<sequence>MTAPLGFAVIDKPAGLTSHACVARIRRLLGIRRVGHGGTLDPAVTGVLPIAVGQATRLLPYLPGDKTYRGVIQLGITTNTDDLEGEISSRQPLPALSSAELEQALAPFRGLIQQRPPQVSAVHVDGERAHARARRGEQMDLPERAITIHHLHLLNWCPEQGQLRVEVHCSAGTYIRSLARDLGQNLGCGGCLASLRRTQALGFQDAQAIPLPERPEPGATATDPPALPLLPPQDALAHLPQRRLSAREQEDWSCGRRITPGADQESDAVVVLSEGGRMLGLGVPDGTGGLQPKVVFEARG</sequence>